<gene>
    <name type="primary">fliE</name>
    <name type="ordered locus">BSU16200</name>
</gene>
<proteinExistence type="inferred from homology"/>
<name>FLIE_BACSU</name>
<feature type="chain" id="PRO_0000105529" description="Flagellar hook-basal body complex protein FliE">
    <location>
        <begin position="1"/>
        <end position="106"/>
    </location>
</feature>
<feature type="region of interest" description="Disordered" evidence="2">
    <location>
        <begin position="1"/>
        <end position="36"/>
    </location>
</feature>
<feature type="compositionally biased region" description="Low complexity" evidence="2">
    <location>
        <begin position="9"/>
        <end position="27"/>
    </location>
</feature>
<sequence>MINAISPFQVQNTQNTQNATNQVNNSQKTDSSNQTSFSELLKNSISSLNESQVASDNMTNALAAGKDVNLDEVMIAAQKASISLTAATEFRNKAVEAYQEIMRMQM</sequence>
<protein>
    <recommendedName>
        <fullName>Flagellar hook-basal body complex protein FliE</fullName>
    </recommendedName>
</protein>
<organism>
    <name type="scientific">Bacillus subtilis (strain 168)</name>
    <dbReference type="NCBI Taxonomy" id="224308"/>
    <lineage>
        <taxon>Bacteria</taxon>
        <taxon>Bacillati</taxon>
        <taxon>Bacillota</taxon>
        <taxon>Bacilli</taxon>
        <taxon>Bacillales</taxon>
        <taxon>Bacillaceae</taxon>
        <taxon>Bacillus</taxon>
    </lineage>
</organism>
<comment type="subcellular location">
    <subcellularLocation>
        <location evidence="1">Bacterial flagellum basal body</location>
    </subcellularLocation>
</comment>
<comment type="similarity">
    <text evidence="3">Belongs to the FliE family.</text>
</comment>
<evidence type="ECO:0000250" key="1"/>
<evidence type="ECO:0000256" key="2">
    <source>
        <dbReference type="SAM" id="MobiDB-lite"/>
    </source>
</evidence>
<evidence type="ECO:0000305" key="3"/>
<dbReference type="EMBL" id="M54965">
    <property type="protein sequence ID" value="AAA22443.1"/>
    <property type="molecule type" value="Genomic_DNA"/>
</dbReference>
<dbReference type="EMBL" id="AL009126">
    <property type="protein sequence ID" value="CAB13493.1"/>
    <property type="molecule type" value="Genomic_DNA"/>
</dbReference>
<dbReference type="PIR" id="JG0021">
    <property type="entry name" value="JG0021"/>
</dbReference>
<dbReference type="RefSeq" id="NP_389502.1">
    <property type="nucleotide sequence ID" value="NC_000964.3"/>
</dbReference>
<dbReference type="RefSeq" id="WP_003238544.1">
    <property type="nucleotide sequence ID" value="NZ_OZ025638.1"/>
</dbReference>
<dbReference type="SMR" id="P24502"/>
<dbReference type="FunCoup" id="P24502">
    <property type="interactions" value="110"/>
</dbReference>
<dbReference type="STRING" id="224308.BSU16200"/>
<dbReference type="PaxDb" id="224308-BSU16200"/>
<dbReference type="EnsemblBacteria" id="CAB13493">
    <property type="protein sequence ID" value="CAB13493"/>
    <property type="gene ID" value="BSU_16200"/>
</dbReference>
<dbReference type="GeneID" id="86873871"/>
<dbReference type="GeneID" id="939470"/>
<dbReference type="KEGG" id="bsu:BSU16200"/>
<dbReference type="PATRIC" id="fig|224308.179.peg.1760"/>
<dbReference type="eggNOG" id="COG1677">
    <property type="taxonomic scope" value="Bacteria"/>
</dbReference>
<dbReference type="InParanoid" id="P24502"/>
<dbReference type="OrthoDB" id="9812413at2"/>
<dbReference type="PhylomeDB" id="P24502"/>
<dbReference type="BioCyc" id="BSUB:BSU16200-MONOMER"/>
<dbReference type="PRO" id="PR:P24502"/>
<dbReference type="Proteomes" id="UP000001570">
    <property type="component" value="Chromosome"/>
</dbReference>
<dbReference type="GO" id="GO:0009425">
    <property type="term" value="C:bacterial-type flagellum basal body"/>
    <property type="evidence" value="ECO:0007669"/>
    <property type="project" value="UniProtKB-SubCell"/>
</dbReference>
<dbReference type="GO" id="GO:0003774">
    <property type="term" value="F:cytoskeletal motor activity"/>
    <property type="evidence" value="ECO:0007669"/>
    <property type="project" value="InterPro"/>
</dbReference>
<dbReference type="GO" id="GO:0005198">
    <property type="term" value="F:structural molecule activity"/>
    <property type="evidence" value="ECO:0007669"/>
    <property type="project" value="InterPro"/>
</dbReference>
<dbReference type="GO" id="GO:0044780">
    <property type="term" value="P:bacterial-type flagellum assembly"/>
    <property type="evidence" value="ECO:0000315"/>
    <property type="project" value="CACAO"/>
</dbReference>
<dbReference type="GO" id="GO:0071978">
    <property type="term" value="P:bacterial-type flagellum-dependent swarming motility"/>
    <property type="evidence" value="ECO:0000315"/>
    <property type="project" value="CACAO"/>
</dbReference>
<dbReference type="HAMAP" id="MF_00724">
    <property type="entry name" value="FliE"/>
    <property type="match status" value="1"/>
</dbReference>
<dbReference type="InterPro" id="IPR001624">
    <property type="entry name" value="FliE"/>
</dbReference>
<dbReference type="NCBIfam" id="TIGR00205">
    <property type="entry name" value="fliE"/>
    <property type="match status" value="1"/>
</dbReference>
<dbReference type="PANTHER" id="PTHR34653">
    <property type="match status" value="1"/>
</dbReference>
<dbReference type="PANTHER" id="PTHR34653:SF1">
    <property type="entry name" value="FLAGELLAR HOOK-BASAL BODY COMPLEX PROTEIN FLIE"/>
    <property type="match status" value="1"/>
</dbReference>
<dbReference type="Pfam" id="PF02049">
    <property type="entry name" value="FliE"/>
    <property type="match status" value="1"/>
</dbReference>
<dbReference type="PRINTS" id="PR01006">
    <property type="entry name" value="FLGHOOKFLIE"/>
</dbReference>
<keyword id="KW-0975">Bacterial flagellum</keyword>
<keyword id="KW-1185">Reference proteome</keyword>
<accession>P24502</accession>
<reference key="1">
    <citation type="journal article" date="1991" name="Gene">
        <title>Gene-protein relationships in the flagellar hook-basal body complex of Bacillus subtilis: sequences of the flgB, flgC, flgG, fliE and fliF genes.</title>
        <authorList>
            <person name="Zuberi A.R."/>
            <person name="Ying C."/>
            <person name="Bischoff D.S."/>
            <person name="Ordal G.W."/>
        </authorList>
    </citation>
    <scope>NUCLEOTIDE SEQUENCE [GENOMIC DNA]</scope>
</reference>
<reference key="2">
    <citation type="journal article" date="1997" name="Nature">
        <title>The complete genome sequence of the Gram-positive bacterium Bacillus subtilis.</title>
        <authorList>
            <person name="Kunst F."/>
            <person name="Ogasawara N."/>
            <person name="Moszer I."/>
            <person name="Albertini A.M."/>
            <person name="Alloni G."/>
            <person name="Azevedo V."/>
            <person name="Bertero M.G."/>
            <person name="Bessieres P."/>
            <person name="Bolotin A."/>
            <person name="Borchert S."/>
            <person name="Borriss R."/>
            <person name="Boursier L."/>
            <person name="Brans A."/>
            <person name="Braun M."/>
            <person name="Brignell S.C."/>
            <person name="Bron S."/>
            <person name="Brouillet S."/>
            <person name="Bruschi C.V."/>
            <person name="Caldwell B."/>
            <person name="Capuano V."/>
            <person name="Carter N.M."/>
            <person name="Choi S.-K."/>
            <person name="Codani J.-J."/>
            <person name="Connerton I.F."/>
            <person name="Cummings N.J."/>
            <person name="Daniel R.A."/>
            <person name="Denizot F."/>
            <person name="Devine K.M."/>
            <person name="Duesterhoeft A."/>
            <person name="Ehrlich S.D."/>
            <person name="Emmerson P.T."/>
            <person name="Entian K.-D."/>
            <person name="Errington J."/>
            <person name="Fabret C."/>
            <person name="Ferrari E."/>
            <person name="Foulger D."/>
            <person name="Fritz C."/>
            <person name="Fujita M."/>
            <person name="Fujita Y."/>
            <person name="Fuma S."/>
            <person name="Galizzi A."/>
            <person name="Galleron N."/>
            <person name="Ghim S.-Y."/>
            <person name="Glaser P."/>
            <person name="Goffeau A."/>
            <person name="Golightly E.J."/>
            <person name="Grandi G."/>
            <person name="Guiseppi G."/>
            <person name="Guy B.J."/>
            <person name="Haga K."/>
            <person name="Haiech J."/>
            <person name="Harwood C.R."/>
            <person name="Henaut A."/>
            <person name="Hilbert H."/>
            <person name="Holsappel S."/>
            <person name="Hosono S."/>
            <person name="Hullo M.-F."/>
            <person name="Itaya M."/>
            <person name="Jones L.-M."/>
            <person name="Joris B."/>
            <person name="Karamata D."/>
            <person name="Kasahara Y."/>
            <person name="Klaerr-Blanchard M."/>
            <person name="Klein C."/>
            <person name="Kobayashi Y."/>
            <person name="Koetter P."/>
            <person name="Koningstein G."/>
            <person name="Krogh S."/>
            <person name="Kumano M."/>
            <person name="Kurita K."/>
            <person name="Lapidus A."/>
            <person name="Lardinois S."/>
            <person name="Lauber J."/>
            <person name="Lazarevic V."/>
            <person name="Lee S.-M."/>
            <person name="Levine A."/>
            <person name="Liu H."/>
            <person name="Masuda S."/>
            <person name="Mauel C."/>
            <person name="Medigue C."/>
            <person name="Medina N."/>
            <person name="Mellado R.P."/>
            <person name="Mizuno M."/>
            <person name="Moestl D."/>
            <person name="Nakai S."/>
            <person name="Noback M."/>
            <person name="Noone D."/>
            <person name="O'Reilly M."/>
            <person name="Ogawa K."/>
            <person name="Ogiwara A."/>
            <person name="Oudega B."/>
            <person name="Park S.-H."/>
            <person name="Parro V."/>
            <person name="Pohl T.M."/>
            <person name="Portetelle D."/>
            <person name="Porwollik S."/>
            <person name="Prescott A.M."/>
            <person name="Presecan E."/>
            <person name="Pujic P."/>
            <person name="Purnelle B."/>
            <person name="Rapoport G."/>
            <person name="Rey M."/>
            <person name="Reynolds S."/>
            <person name="Rieger M."/>
            <person name="Rivolta C."/>
            <person name="Rocha E."/>
            <person name="Roche B."/>
            <person name="Rose M."/>
            <person name="Sadaie Y."/>
            <person name="Sato T."/>
            <person name="Scanlan E."/>
            <person name="Schleich S."/>
            <person name="Schroeter R."/>
            <person name="Scoffone F."/>
            <person name="Sekiguchi J."/>
            <person name="Sekowska A."/>
            <person name="Seror S.J."/>
            <person name="Serror P."/>
            <person name="Shin B.-S."/>
            <person name="Soldo B."/>
            <person name="Sorokin A."/>
            <person name="Tacconi E."/>
            <person name="Takagi T."/>
            <person name="Takahashi H."/>
            <person name="Takemaru K."/>
            <person name="Takeuchi M."/>
            <person name="Tamakoshi A."/>
            <person name="Tanaka T."/>
            <person name="Terpstra P."/>
            <person name="Tognoni A."/>
            <person name="Tosato V."/>
            <person name="Uchiyama S."/>
            <person name="Vandenbol M."/>
            <person name="Vannier F."/>
            <person name="Vassarotti A."/>
            <person name="Viari A."/>
            <person name="Wambutt R."/>
            <person name="Wedler E."/>
            <person name="Wedler H."/>
            <person name="Weitzenegger T."/>
            <person name="Winters P."/>
            <person name="Wipat A."/>
            <person name="Yamamoto H."/>
            <person name="Yamane K."/>
            <person name="Yasumoto K."/>
            <person name="Yata K."/>
            <person name="Yoshida K."/>
            <person name="Yoshikawa H.-F."/>
            <person name="Zumstein E."/>
            <person name="Yoshikawa H."/>
            <person name="Danchin A."/>
        </authorList>
    </citation>
    <scope>NUCLEOTIDE SEQUENCE [LARGE SCALE GENOMIC DNA]</scope>
    <source>
        <strain>168</strain>
    </source>
</reference>